<feature type="chain" id="PRO_0000153566" description="Immunoglobulin heavy constant alpha 1">
    <location>
        <begin position="1" status="less than"/>
        <end position="398"/>
    </location>
</feature>
<feature type="topological domain" description="Extracellular" evidence="21">
    <location>
        <begin position="1"/>
        <end position="364"/>
    </location>
</feature>
<feature type="transmembrane region" description="Helical" evidence="1">
    <location>
        <begin position="365"/>
        <end position="383"/>
    </location>
</feature>
<feature type="topological domain" description="Cytoplasmic" evidence="21">
    <location>
        <begin position="384"/>
        <end position="398"/>
    </location>
</feature>
<feature type="domain" description="Ig-like 1" evidence="2">
    <location>
        <begin position="6"/>
        <end position="98"/>
    </location>
</feature>
<feature type="domain" description="Ig-like 2" evidence="2">
    <location>
        <begin position="125"/>
        <end position="220"/>
    </location>
</feature>
<feature type="domain" description="Ig-like 3" evidence="2">
    <location>
        <begin position="228"/>
        <end position="330"/>
    </location>
</feature>
<feature type="region of interest" description="Disordered" evidence="3">
    <location>
        <begin position="96"/>
        <end position="122"/>
    </location>
</feature>
<feature type="compositionally biased region" description="Pro residues" evidence="3">
    <location>
        <begin position="101"/>
        <end position="119"/>
    </location>
</feature>
<feature type="glycosylation site" description="O-linked (GalNAc...) serine" evidence="13">
    <location>
        <position position="105"/>
    </location>
</feature>
<feature type="glycosylation site" description="O-linked (GalNAc...) threonine" evidence="8 10">
    <location>
        <position position="106"/>
    </location>
</feature>
<feature type="glycosylation site" description="O-linked (GalNAc...) threonine" evidence="8 10">
    <location>
        <position position="109"/>
    </location>
</feature>
<feature type="glycosylation site" description="O-linked (GalNAc...) serine" evidence="8 10 13">
    <location>
        <position position="111"/>
    </location>
</feature>
<feature type="glycosylation site" description="O-linked (GalNAc...) serine" evidence="8 10 13">
    <location>
        <position position="113"/>
    </location>
</feature>
<feature type="glycosylation site" description="O-linked (GalNAc...) threonine" evidence="10">
    <location>
        <position position="114"/>
    </location>
</feature>
<feature type="glycosylation site" description="O-linked (GalNAc...) threonine" evidence="8 10">
    <location>
        <position position="117"/>
    </location>
</feature>
<feature type="glycosylation site" description="O-linked (GalNAc...) serine" evidence="13">
    <location>
        <position position="119"/>
    </location>
</feature>
<feature type="glycosylation site" description="O-linked (GalNAc...) serine" evidence="13">
    <location>
        <position position="121"/>
    </location>
</feature>
<feature type="glycosylation site" description="N-linked (GlcNAc...) (complex) asparagine" evidence="5 6 7 9">
    <location>
        <position position="144"/>
    </location>
</feature>
<feature type="disulfide bond" description="Interchain (with light chain)" evidence="12">
    <location>
        <position position="14"/>
    </location>
</feature>
<feature type="disulfide bond" evidence="2">
    <location>
        <begin position="26"/>
        <end position="85"/>
    </location>
</feature>
<feature type="disulfide bond">
    <location>
        <begin position="77"/>
        <end position="101"/>
    </location>
</feature>
<feature type="disulfide bond" description="Interchain (with heavy chain)" evidence="12">
    <location>
        <position position="122"/>
    </location>
</feature>
<feature type="disulfide bond" description="Or C-123 with C-182" evidence="12">
    <location>
        <begin position="123"/>
        <end position="180"/>
    </location>
</feature>
<feature type="disulfide bond" evidence="2">
    <location>
        <begin position="147"/>
        <end position="204"/>
    </location>
</feature>
<feature type="disulfide bond" description="Interchain (with heavy chain) (or with C-180)" evidence="12">
    <location>
        <position position="182"/>
    </location>
</feature>
<feature type="disulfide bond" description="Interchain (with heavy chain of another subunit) (or with C-503 of PIGR/the secretory component)" evidence="11 12">
    <location>
        <position position="192"/>
    </location>
</feature>
<feature type="disulfide bond" evidence="2">
    <location>
        <begin position="250"/>
        <end position="313"/>
    </location>
</feature>
<feature type="splice variant" id="VSP_061831" description="In isoform 1.">
    <original>DWQMPPPYVVLDLPQETLEE</original>
    <variation>GKPTHVNVSVVMAEVDGTCY</variation>
    <location>
        <begin position="334"/>
        <end position="353"/>
    </location>
</feature>
<feature type="splice variant" id="VSP_061832" description="In isoform 1.">
    <location>
        <begin position="354"/>
        <end position="398"/>
    </location>
</feature>
<feature type="sequence variant" id="VAR_014602" description="In dbSNP:rs1407.">
    <original>E</original>
    <variation>D</variation>
    <location>
        <position position="176"/>
    </location>
</feature>
<feature type="sequence conflict" description="In Ref. 2; AA sequence." evidence="21" ref="2">
    <original>TPS</original>
    <variation>PST</variation>
    <location>
        <begin position="163"/>
        <end position="165"/>
    </location>
</feature>
<feature type="sequence conflict" description="In Ref. 1; AA sequence." evidence="21" ref="1">
    <original>E</original>
    <variation>B</variation>
    <location>
        <position position="176"/>
    </location>
</feature>
<feature type="sequence conflict" description="In Ref. 1; AA sequence." evidence="21" ref="1">
    <original>P</original>
    <variation>S</variation>
    <location>
        <position position="190"/>
    </location>
</feature>
<feature type="sequence conflict" description="In Ref. 1; AA sequence." evidence="21" ref="1">
    <original>R</original>
    <variation>H</variation>
    <location>
        <position position="227"/>
    </location>
</feature>
<feature type="sequence conflict" description="In Ref. 1; AA sequence." evidence="21" ref="1">
    <original>H</original>
    <variation>R</variation>
    <location>
        <position position="231"/>
    </location>
</feature>
<feature type="sequence conflict" description="In Ref. 1; AA sequence." evidence="21" ref="1">
    <original>T</original>
    <variation>E</variation>
    <location>
        <position position="290"/>
    </location>
</feature>
<feature type="non-terminal residue">
    <location>
        <position position="1"/>
    </location>
</feature>
<feature type="strand" evidence="26">
    <location>
        <begin position="126"/>
        <end position="129"/>
    </location>
</feature>
<feature type="helix" evidence="26">
    <location>
        <begin position="134"/>
        <end position="138"/>
    </location>
</feature>
<feature type="strand" evidence="26">
    <location>
        <begin position="146"/>
        <end position="150"/>
    </location>
</feature>
<feature type="strand" evidence="24">
    <location>
        <begin position="162"/>
        <end position="164"/>
    </location>
</feature>
<feature type="strand" evidence="25">
    <location>
        <begin position="166"/>
        <end position="168"/>
    </location>
</feature>
<feature type="strand" evidence="27">
    <location>
        <begin position="176"/>
        <end position="178"/>
    </location>
</feature>
<feature type="turn" evidence="26">
    <location>
        <begin position="179"/>
        <end position="181"/>
    </location>
</feature>
<feature type="strand" evidence="24">
    <location>
        <begin position="185"/>
        <end position="188"/>
    </location>
</feature>
<feature type="turn" evidence="24">
    <location>
        <begin position="190"/>
        <end position="192"/>
    </location>
</feature>
<feature type="helix" evidence="26">
    <location>
        <begin position="193"/>
        <end position="198"/>
    </location>
</feature>
<feature type="strand" evidence="26">
    <location>
        <begin position="202"/>
        <end position="205"/>
    </location>
</feature>
<feature type="strand" evidence="26">
    <location>
        <begin position="209"/>
        <end position="212"/>
    </location>
</feature>
<feature type="strand" evidence="26">
    <location>
        <begin position="216"/>
        <end position="219"/>
    </location>
</feature>
<feature type="strand" evidence="26">
    <location>
        <begin position="229"/>
        <end position="233"/>
    </location>
</feature>
<feature type="turn" evidence="27">
    <location>
        <begin position="237"/>
        <end position="239"/>
    </location>
</feature>
<feature type="turn" evidence="26">
    <location>
        <begin position="240"/>
        <end position="243"/>
    </location>
</feature>
<feature type="strand" evidence="26">
    <location>
        <begin position="246"/>
        <end position="258"/>
    </location>
</feature>
<feature type="strand" evidence="26">
    <location>
        <begin position="261"/>
        <end position="266"/>
    </location>
</feature>
<feature type="helix" evidence="26">
    <location>
        <begin position="273"/>
        <end position="275"/>
    </location>
</feature>
<feature type="strand" evidence="26">
    <location>
        <begin position="276"/>
        <end position="278"/>
    </location>
</feature>
<feature type="strand" evidence="26">
    <location>
        <begin position="287"/>
        <end position="289"/>
    </location>
</feature>
<feature type="strand" evidence="26">
    <location>
        <begin position="292"/>
        <end position="300"/>
    </location>
</feature>
<feature type="helix" evidence="26">
    <location>
        <begin position="302"/>
        <end position="307"/>
    </location>
</feature>
<feature type="strand" evidence="26">
    <location>
        <begin position="311"/>
        <end position="316"/>
    </location>
</feature>
<feature type="strand" evidence="26">
    <location>
        <begin position="318"/>
        <end position="320"/>
    </location>
</feature>
<feature type="strand" evidence="26">
    <location>
        <begin position="325"/>
        <end position="329"/>
    </location>
</feature>
<feature type="binding site" evidence="14">
    <location sequence="P01876-1">
        <position position="352"/>
    </location>
    <ligand>
        <name>3-hydroxy-L-kynurenine</name>
        <dbReference type="ChEBI" id="CHEBI:58125"/>
        <note>multimeric 3-hydroxykynurenine chromophore</note>
    </ligand>
</feature>
<feature type="glycosylation site" description="N-linked (GlcNAc...) (complex) asparagine" evidence="6">
    <location sequence="P01876-1">
        <position position="340"/>
    </location>
</feature>
<feature type="disulfide bond" description="Interchain (with J chain); in oligomeric form" evidence="12">
    <location sequence="P01876-1">
        <position position="352"/>
    </location>
</feature>
<protein>
    <recommendedName>
        <fullName evidence="15 20">Immunoglobulin heavy constant alpha 1</fullName>
    </recommendedName>
    <alternativeName>
        <fullName evidence="21">Ig alpha-1 chain C region</fullName>
    </alternativeName>
    <alternativeName>
        <fullName evidence="22">Ig alpha-1 chain C region BUR</fullName>
    </alternativeName>
    <alternativeName>
        <fullName evidence="23">Ig alpha-1 chain C region TRO</fullName>
    </alternativeName>
</protein>
<comment type="function">
    <text evidence="16 17 18 19">Constant region of immunoglobulin heavy chains. Immunoglobulins, also known as antibodies, are membrane-bound or secreted glycoproteins produced by B lymphocytes. In the recognition phase of humoral immunity, the membrane-bound immunoglobulins serve as receptors which, upon binding of a specific antigen, trigger the clonal expansion and differentiation of B lymphocytes into immunoglobulins-secreting plasma cells. Secreted immunoglobulins mediate the effector phase of humoral immunity, which results in the elimination of bound antigens (PubMed:20176268, PubMed:22158414). The antigen binding site is formed by the variable domain of one heavy chain, together with that of its associated light chain. Thus, each immunoglobulin has two antigen binding sites with remarkable affinity for a particular antigen. The variable domains are assembled by a process called V-(D)-J rearrangement and can then be subjected to somatic hypermutations which, after exposure to antigen and selection, allow affinity maturation for a particular antigen (PubMed:17576170, PubMed:20176268). Ig alpha is the major immunoglobulin class in body secretions (PubMed:2241915).</text>
</comment>
<comment type="subunit">
    <text evidence="11 17 19">Immunoglobulins are composed of two identical heavy chains and two identical light chains; disulfide-linked (PubMed:20176268). Monomeric or polymeric (PubMed:2241915). Part of the secretory IgA (sIgA) complex that consists of two, four or five IgA monomers, and two additional non-Ig polypeptides, namely the JCHAIN and the secretory component (the proteolytic product of PIGR).</text>
</comment>
<comment type="subcellular location">
    <molecule>Isoform 1</molecule>
    <subcellularLocation>
        <location evidence="17 18">Secreted</location>
    </subcellularLocation>
</comment>
<comment type="subcellular location">
    <molecule>Isoform 2</molecule>
    <subcellularLocation>
        <location evidence="17 18">Cell membrane</location>
        <topology evidence="1">Single-pass type I membrane protein</topology>
    </subcellularLocation>
</comment>
<comment type="alternative products">
    <event type="alternative splicing"/>
    <isoform>
        <id>P01876-2</id>
        <name>2</name>
        <name>Membrane-bound</name>
        <name>mIgA1</name>
        <sequence type="displayed"/>
    </isoform>
    <isoform>
        <id>P01876-1</id>
        <name>1</name>
        <name>Secreted</name>
        <name>sIgA1</name>
        <sequence type="described" ref="VSP_061831 VSP_061832"/>
    </isoform>
</comment>
<comment type="PTM">
    <molecule>Isoform 1</molecule>
    <text evidence="14">3-Hydroxykynurenine, an oxidized tryptophan metabolite that is common in biological fluids, reacts with alpha-1-microglobulin to form heterogeneous polycyclic chromophores including hydroxanthommatin. The chromophore reacts with accessible cysteines forming non-reducible thioether cross-links with Ig alpha-1 chain C region Cys-352.</text>
</comment>
<comment type="PTM">
    <text evidence="5 6 7 9">N- and O-glycosylated. N-glycan at Asn-144: Hex5HexNAc4.</text>
</comment>
<comment type="polymorphism">
    <text evidence="21">There are several alleles. The sequence shown is that of IMGT allele IGHA1*02.</text>
</comment>
<comment type="disease">
    <text evidence="4">A chromosomal aberration involving IGHA1 is found in multiple myeloma (MM) cell lines. Translocation t(1;14)(q21;q32) that forms a FCRL4-IGHA1 fusion protein.</text>
</comment>
<comment type="caution">
    <text evidence="21">For an example of a full-length immunoglobulin alpha heavy chain see AC P0DOX2.</text>
</comment>
<comment type="sequence caution" evidence="21">
    <conflict type="erroneous initiation">
        <sequence resource="EMBL-CDS" id="AAC82528"/>
    </conflict>
    <text>Truncated N-terminus.</text>
</comment>
<reference key="1">
    <citation type="journal article" date="1975" name="Hoppe-Seyler's Z. Physiol. Chem.">
        <title>The primary structure of a monoclonal IgA-immunoglobulin (IgA Tro.), II. The amino acid sequence of the H-chain, alpha-type, subgroup III; structure of the complete IgA-molecule.</title>
        <authorList>
            <person name="Kratzin H."/>
            <person name="Altevogt P."/>
            <person name="Ruban E."/>
            <person name="Kortt A."/>
            <person name="Staroscik K."/>
            <person name="Hilschmann N."/>
        </authorList>
    </citation>
    <scope>PROTEIN SEQUENCE</scope>
</reference>
<reference key="2">
    <citation type="journal article" date="1979" name="J. Biol. Chem.">
        <title>Primary structure of a human IgA1 immunoglobulin. IV. Streptococcal IgA1 protease, digestion, Fab and Fc fragments, and the complete amino acid sequence of the alpha 1 heavy chain.</title>
        <authorList>
            <person name="Putnam F.W."/>
            <person name="Liu Y.-S.V."/>
            <person name="Low T.L.K."/>
        </authorList>
    </citation>
    <scope>PROTEIN SEQUENCE</scope>
</reference>
<reference key="3">
    <citation type="journal article" date="1982" name="Cell">
        <title>Structure of human immunoglobulin gamma genes: implications for evolution of a gene family.</title>
        <authorList>
            <person name="Takahashi N."/>
            <person name="Ueda S."/>
            <person name="Obata M."/>
            <person name="Nikaido T."/>
            <person name="Nakai S."/>
            <person name="Honjo T."/>
        </authorList>
    </citation>
    <scope>NUCLEOTIDE SEQUENCE [GENOMIC DNA] (IMGT ALLELE IGHA1*01)</scope>
</reference>
<reference key="4">
    <citation type="journal article" date="1984" name="Cell">
        <title>Mechanisms of divergence and convergence of the human immunoglobulin alpha 1 and alpha 2 constant region gene sequences.</title>
        <authorList>
            <person name="Flanagan J.G."/>
            <person name="Lefranc M.-P."/>
            <person name="Rabbitts T.H."/>
        </authorList>
    </citation>
    <scope>NUCLEOTIDE SEQUENCE [GENOMIC DNA]</scope>
</reference>
<reference key="5">
    <citation type="journal article" date="2003" name="Nature">
        <title>The DNA sequence and analysis of human chromosome 14.</title>
        <authorList>
            <person name="Heilig R."/>
            <person name="Eckenberg R."/>
            <person name="Petit J.-L."/>
            <person name="Fonknechten N."/>
            <person name="Da Silva C."/>
            <person name="Cattolico L."/>
            <person name="Levy M."/>
            <person name="Barbe V."/>
            <person name="De Berardinis V."/>
            <person name="Ureta-Vidal A."/>
            <person name="Pelletier E."/>
            <person name="Vico V."/>
            <person name="Anthouard V."/>
            <person name="Rowen L."/>
            <person name="Madan A."/>
            <person name="Qin S."/>
            <person name="Sun H."/>
            <person name="Du H."/>
            <person name="Pepin K."/>
            <person name="Artiguenave F."/>
            <person name="Robert C."/>
            <person name="Cruaud C."/>
            <person name="Bruels T."/>
            <person name="Jaillon O."/>
            <person name="Friedlander L."/>
            <person name="Samson G."/>
            <person name="Brottier P."/>
            <person name="Cure S."/>
            <person name="Segurens B."/>
            <person name="Aniere F."/>
            <person name="Samain S."/>
            <person name="Crespeau H."/>
            <person name="Abbasi N."/>
            <person name="Aiach N."/>
            <person name="Boscus D."/>
            <person name="Dickhoff R."/>
            <person name="Dors M."/>
            <person name="Dubois I."/>
            <person name="Friedman C."/>
            <person name="Gouyvenoux M."/>
            <person name="James R."/>
            <person name="Madan A."/>
            <person name="Mairey-Estrada B."/>
            <person name="Mangenot S."/>
            <person name="Martins N."/>
            <person name="Menard M."/>
            <person name="Oztas S."/>
            <person name="Ratcliffe A."/>
            <person name="Shaffer T."/>
            <person name="Trask B."/>
            <person name="Vacherie B."/>
            <person name="Bellemere C."/>
            <person name="Belser C."/>
            <person name="Besnard-Gonnet M."/>
            <person name="Bartol-Mavel D."/>
            <person name="Boutard M."/>
            <person name="Briez-Silla S."/>
            <person name="Combette S."/>
            <person name="Dufosse-Laurent V."/>
            <person name="Ferron C."/>
            <person name="Lechaplais C."/>
            <person name="Louesse C."/>
            <person name="Muselet D."/>
            <person name="Magdelenat G."/>
            <person name="Pateau E."/>
            <person name="Petit E."/>
            <person name="Sirvain-Trukniewicz P."/>
            <person name="Trybou A."/>
            <person name="Vega-Czarny N."/>
            <person name="Bataille E."/>
            <person name="Bluet E."/>
            <person name="Bordelais I."/>
            <person name="Dubois M."/>
            <person name="Dumont C."/>
            <person name="Guerin T."/>
            <person name="Haffray S."/>
            <person name="Hammadi R."/>
            <person name="Muanga J."/>
            <person name="Pellouin V."/>
            <person name="Robert D."/>
            <person name="Wunderle E."/>
            <person name="Gauguet G."/>
            <person name="Roy A."/>
            <person name="Sainte-Marthe L."/>
            <person name="Verdier J."/>
            <person name="Verdier-Discala C."/>
            <person name="Hillier L.W."/>
            <person name="Fulton L."/>
            <person name="McPherson J."/>
            <person name="Matsuda F."/>
            <person name="Wilson R."/>
            <person name="Scarpelli C."/>
            <person name="Gyapay G."/>
            <person name="Wincker P."/>
            <person name="Saurin W."/>
            <person name="Quetier F."/>
            <person name="Waterston R."/>
            <person name="Hood L."/>
            <person name="Weissenbach J."/>
        </authorList>
    </citation>
    <scope>NUCLEOTIDE SEQUENCE [LARGE SCALE GENOMIC DNA] (IMGT ALLELE IGHA1*02)</scope>
</reference>
<reference key="6">
    <citation type="journal article" date="1990" name="Immunogenetics">
        <title>Gene segments encoding membrane domains of the human immunoglobulin gamma 3 and alpha chains.</title>
        <authorList>
            <person name="Bensmana M."/>
            <person name="Lefranc M.P."/>
        </authorList>
    </citation>
    <scope>NUCLEOTIDE SEQUENCE [GENOMIC DNA] OF 333-398 (ISOFORM 2)</scope>
</reference>
<reference key="7">
    <citation type="journal article" date="1994" name="J. Biol. Chem.">
        <title>Location of a novel type of interpolypeptide chain linkage in the human protein HC-IgA complex (HC-IgA) and identification of a heterogeneous chromophore associated with the complex.</title>
        <authorList>
            <person name="Calero M."/>
            <person name="Escribano J."/>
            <person name="Grubb A."/>
            <person name="Mendez E."/>
        </authorList>
    </citation>
    <scope>PROTEIN SEQUENCE OF 345-353 (ISOFORM 1)</scope>
    <scope>BINDING TO CHROMOPHORE (ISOFORM 1)</scope>
</reference>
<reference key="8">
    <citation type="journal article" date="1974" name="J. Biol. Chem.">
        <title>Structure of the carbohydrate units of IgA1 immunoglobulin. II. Structure of the O-glycosidically linked oligosaccharide units.</title>
        <authorList>
            <person name="Baenziger J."/>
            <person name="Kornfeld S."/>
        </authorList>
    </citation>
    <scope>GLYCOSYLATION AT SER-105; SER-111; SER-113; SER-119 AND SER-121</scope>
</reference>
<reference key="9">
    <citation type="journal article" date="1979" name="Hoppe-Seyler's Z. Physiol. Chem.">
        <title>Rule of antibody structure. Primary structure of a human monoclonal IgA-immunoglobulin (myeloma protein Tro). VII. Purification and characterization of the disulfide bridges.</title>
        <authorList>
            <person name="Yang C.-Y."/>
            <person name="Kratzin H."/>
            <person name="Gotz H."/>
            <person name="Hilschmann N."/>
        </authorList>
    </citation>
    <scope>DISULFIDE BONDS</scope>
</reference>
<reference key="10">
    <citation type="journal article" date="1990" name="Biochem. J.">
        <title>The structure and function of human IgA.</title>
        <authorList>
            <person name="Kerr M.A."/>
        </authorList>
    </citation>
    <scope>REVIEW ON FUNCTION</scope>
</reference>
<reference key="11">
    <citation type="journal article" date="2001" name="Immunity">
        <title>IRTA1 and IRTA2, novel immunoglobulin superfamily receptors expressed in B cells and involved in chromosome 1q21 abnormalities in B cell malignancy.</title>
        <authorList>
            <person name="Hatzivassiliou G."/>
            <person name="Miller I."/>
            <person name="Takizawa J."/>
            <person name="Palanisamy N."/>
            <person name="Rao P.H."/>
            <person name="Iida S."/>
            <person name="Tagawa S."/>
            <person name="Taniwaki M."/>
            <person name="Russo J."/>
            <person name="Neri A."/>
            <person name="Cattoretti G."/>
            <person name="Clynes R."/>
            <person name="Mendelsohn C."/>
            <person name="Chaganti R.S.K."/>
            <person name="Dalla-Favera R."/>
        </authorList>
    </citation>
    <scope>CHROMOSOMAL TRANSLOCATION WITH FCRL4</scope>
</reference>
<reference key="12">
    <citation type="journal article" date="2001" name="Exp. Clin. Immunogenet.">
        <title>Nomenclature of the human immunoglobulin heavy (IGH) genes.</title>
        <authorList>
            <person name="Lefranc M.P."/>
        </authorList>
    </citation>
    <scope>NOMENCLATURE</scope>
</reference>
<reference key="13">
    <citation type="book" date="2001" name="The Immunoglobulin FactsBook.">
        <title>The Immunoglobulin FactsBook.</title>
        <editorList>
            <person name="Lefranc M.P."/>
            <person name="Lefranc G."/>
        </editorList>
        <authorList>
            <person name="Lefranc M.P."/>
            <person name="Lefranc G."/>
        </authorList>
    </citation>
    <scope>NOMENCLATURE</scope>
</reference>
<reference key="14">
    <citation type="journal article" date="2004" name="Mol. Cell. Proteomics">
        <title>A proteomic analysis of human bile.</title>
        <authorList>
            <person name="Kristiansen T.Z."/>
            <person name="Bunkenborg J."/>
            <person name="Gronborg M."/>
            <person name="Molina H."/>
            <person name="Thuluvath P.J."/>
            <person name="Argani P."/>
            <person name="Goggins M.G."/>
            <person name="Maitra A."/>
            <person name="Pandey A."/>
        </authorList>
    </citation>
    <scope>GLYCOSYLATION [LARGE SCALE ANALYSIS] AT ASN-144</scope>
    <source>
        <tissue>Bile</tissue>
    </source>
</reference>
<reference key="15">
    <citation type="journal article" date="2007" name="Annu. Rev. Genet.">
        <title>Immunoglobulin somatic hypermutation.</title>
        <authorList>
            <person name="Teng G."/>
            <person name="Papavasiliou F.N."/>
        </authorList>
    </citation>
    <scope>REVIEW ON SOMATIC HYPERMUTATION</scope>
</reference>
<reference key="16">
    <citation type="journal article" date="2009" name="Mol. Cell. Proteomics">
        <title>A strategy for precise and large scale identification of core fucosylated glycoproteins.</title>
        <authorList>
            <person name="Jia W."/>
            <person name="Lu Z."/>
            <person name="Fu Y."/>
            <person name="Wang H.P."/>
            <person name="Wang L.H."/>
            <person name="Chi H."/>
            <person name="Yuan Z.F."/>
            <person name="Zheng Z.B."/>
            <person name="Song L.N."/>
            <person name="Han H.H."/>
            <person name="Liang Y.M."/>
            <person name="Wang J.L."/>
            <person name="Cai Y."/>
            <person name="Zhang Y.K."/>
            <person name="Deng Y.L."/>
            <person name="Ying W.T."/>
            <person name="He S.M."/>
            <person name="Qian X.H."/>
        </authorList>
    </citation>
    <scope>GLYCOSYLATION AT ASN-144</scope>
    <scope>GLYCOSYLATION AT ASN-340 (ISOFORM 1)</scope>
</reference>
<reference key="17">
    <citation type="journal article" date="2009" name="Nat. Methods">
        <title>Enrichment of glycopeptides for glycan structure and attachment site identification.</title>
        <authorList>
            <person name="Nilsson J."/>
            <person name="Rueetschi U."/>
            <person name="Halim A."/>
            <person name="Hesse C."/>
            <person name="Carlsohn E."/>
            <person name="Brinkmalm G."/>
            <person name="Larson G."/>
        </authorList>
    </citation>
    <scope>GLYCOSYLATION [LARGE SCALE ANALYSIS] AT ASN-144</scope>
    <scope>STRUCTURE OF CARBOHYDRATES</scope>
    <source>
        <tissue>Cerebrospinal fluid</tissue>
    </source>
</reference>
<reference key="18">
    <citation type="journal article" date="2010" name="J. Allergy Clin. Immunol.">
        <title>Structure and function of immunoglobulins.</title>
        <authorList>
            <person name="Schroeder H.W. Jr."/>
            <person name="Cavacini L."/>
        </authorList>
    </citation>
    <scope>REVIEW ON IMMUNOGLOBULINS</scope>
</reference>
<reference key="19">
    <citation type="journal article" date="2010" name="Mol. Cell. Proteomics">
        <title>Clustered O-glycans of IgA1: defining macro- and microheterogeneity by use of electron capture/transfer dissociation.</title>
        <authorList>
            <person name="Takahashi K."/>
            <person name="Wall S.B."/>
            <person name="Suzuki H."/>
            <person name="Smith A.D. IV"/>
            <person name="Hall S."/>
            <person name="Poulsen K."/>
            <person name="Kilian M."/>
            <person name="Mobley J.A."/>
            <person name="Julian B.A."/>
            <person name="Mestecky J."/>
            <person name="Novak J."/>
            <person name="Renfrow M.B."/>
        </authorList>
    </citation>
    <scope>GLYCOSYLATION AT THR-106; THR-109; SER-111; SER-113 AND THR-117</scope>
    <scope>IDENTIFICATION BY MASS SPECTROMETRY</scope>
</reference>
<reference key="20">
    <citation type="journal article" date="2011" name="BMC Syst. Biol.">
        <title>Initial characterization of the human central proteome.</title>
        <authorList>
            <person name="Burkard T.R."/>
            <person name="Planyavsky M."/>
            <person name="Kaupe I."/>
            <person name="Breitwieser F.P."/>
            <person name="Buerckstuemmer T."/>
            <person name="Bennett K.L."/>
            <person name="Superti-Furga G."/>
            <person name="Colinge J."/>
        </authorList>
    </citation>
    <scope>IDENTIFICATION BY MASS SPECTROMETRY [LARGE SCALE ANALYSIS]</scope>
</reference>
<reference key="21">
    <citation type="journal article" date="2012" name="Mol. Cell. Proteomics">
        <title>Human urinary glycoproteomics; attachment site specific analysis of N- and O-linked glycosylations by CID and ECD.</title>
        <authorList>
            <person name="Halim A."/>
            <person name="Nilsson J."/>
            <person name="Ruetschi U."/>
            <person name="Hesse C."/>
            <person name="Larson G."/>
        </authorList>
    </citation>
    <scope>GLYCOSYLATION AT ASN-144</scope>
    <scope>STRUCTURE OF CARBOHYDRATES</scope>
    <scope>IDENTIFICATION BY MASS SPECTROMETRY</scope>
</reference>
<reference key="22">
    <citation type="journal article" date="2012" name="Nat. Rev. Immunol.">
        <title>Molecular programming of B cell memory.</title>
        <authorList>
            <person name="McHeyzer-Williams M."/>
            <person name="Okitsu S."/>
            <person name="Wang N."/>
            <person name="McHeyzer-Williams L."/>
        </authorList>
    </citation>
    <scope>REVIEW ON FUNCTION</scope>
</reference>
<reference key="23">
    <citation type="journal article" date="2014" name="J. Proteomics">
        <title>An enzyme assisted RP-RPLC approach for in-depth analysis of human liver phosphoproteome.</title>
        <authorList>
            <person name="Bian Y."/>
            <person name="Song C."/>
            <person name="Cheng K."/>
            <person name="Dong M."/>
            <person name="Wang F."/>
            <person name="Huang J."/>
            <person name="Sun D."/>
            <person name="Wang L."/>
            <person name="Ye M."/>
            <person name="Zou H."/>
        </authorList>
    </citation>
    <scope>IDENTIFICATION BY MASS SPECTROMETRY [LARGE SCALE ANALYSIS]</scope>
    <source>
        <tissue>Liver</tissue>
    </source>
</reference>
<reference key="24">
    <citation type="journal article" date="2020" name="Sci. Rep.">
        <title>Analysis of O-glycoforms of the IgA1 hinge region by sequential deglycosylation.</title>
        <authorList>
            <person name="Ohyama Y."/>
            <person name="Yamaguchi H."/>
            <person name="Nakajima K."/>
            <person name="Mizuno T."/>
            <person name="Fukamachi Y."/>
            <person name="Yokoi Y."/>
            <person name="Tsuboi N."/>
            <person name="Inaguma D."/>
            <person name="Hasegawa M."/>
            <person name="Renfrow M.B."/>
            <person name="Novak J."/>
            <person name="Yuzawa Y."/>
            <person name="Takahashi K."/>
        </authorList>
    </citation>
    <scope>GLYCOSYLATION AT THR-106; THR-109; SER-111; SER-113; THR-114 AND THR-117</scope>
    <scope>IDENTIFICATION BY MASS SPECTROMETRY</scope>
</reference>
<reference key="25">
    <citation type="journal article" date="2020" name="Science">
        <title>Structure of the secretory immunoglobulin A core.</title>
        <authorList>
            <person name="Kumar N."/>
            <person name="Arthur C.P."/>
            <person name="Ciferri C."/>
            <person name="Matsumoto M.L."/>
        </authorList>
    </citation>
    <scope>STRUCTURE BY ELECTRON MICROSCOPY (2.90 ANGSTROMS) OF 123-353 IN COMPLEX WITH PIGR AND JCHAIN</scope>
    <scope>DISULFIDE BOND</scope>
    <scope>SUBUNIT</scope>
</reference>
<name>IGHA1_HUMAN</name>
<evidence type="ECO:0000255" key="1"/>
<evidence type="ECO:0000255" key="2">
    <source>
        <dbReference type="PROSITE-ProRule" id="PRU00114"/>
    </source>
</evidence>
<evidence type="ECO:0000256" key="3">
    <source>
        <dbReference type="SAM" id="MobiDB-lite"/>
    </source>
</evidence>
<evidence type="ECO:0000269" key="4">
    <source>
    </source>
</evidence>
<evidence type="ECO:0000269" key="5">
    <source>
    </source>
</evidence>
<evidence type="ECO:0000269" key="6">
    <source>
    </source>
</evidence>
<evidence type="ECO:0000269" key="7">
    <source>
    </source>
</evidence>
<evidence type="ECO:0000269" key="8">
    <source>
    </source>
</evidence>
<evidence type="ECO:0000269" key="9">
    <source>
    </source>
</evidence>
<evidence type="ECO:0000269" key="10">
    <source>
    </source>
</evidence>
<evidence type="ECO:0000269" key="11">
    <source>
    </source>
</evidence>
<evidence type="ECO:0000269" key="12">
    <source>
    </source>
</evidence>
<evidence type="ECO:0000269" key="13">
    <source>
    </source>
</evidence>
<evidence type="ECO:0000269" key="14">
    <source>
    </source>
</evidence>
<evidence type="ECO:0000303" key="15">
    <source>
    </source>
</evidence>
<evidence type="ECO:0000303" key="16">
    <source>
    </source>
</evidence>
<evidence type="ECO:0000303" key="17">
    <source>
    </source>
</evidence>
<evidence type="ECO:0000303" key="18">
    <source>
    </source>
</evidence>
<evidence type="ECO:0000303" key="19">
    <source>
    </source>
</evidence>
<evidence type="ECO:0000303" key="20">
    <source ref="13"/>
</evidence>
<evidence type="ECO:0000305" key="21"/>
<evidence type="ECO:0000305" key="22">
    <source>
    </source>
</evidence>
<evidence type="ECO:0000305" key="23">
    <source>
    </source>
</evidence>
<evidence type="ECO:0007829" key="24">
    <source>
        <dbReference type="PDB" id="1OW0"/>
    </source>
</evidence>
<evidence type="ECO:0007829" key="25">
    <source>
        <dbReference type="PDB" id="6LXW"/>
    </source>
</evidence>
<evidence type="ECO:0007829" key="26">
    <source>
        <dbReference type="PDB" id="6UE7"/>
    </source>
</evidence>
<evidence type="ECO:0007829" key="27">
    <source>
        <dbReference type="PDB" id="8SKV"/>
    </source>
</evidence>
<accession>P01876</accession>
<accession>A0A286YEY1</accession>
<organism>
    <name type="scientific">Homo sapiens</name>
    <name type="common">Human</name>
    <dbReference type="NCBI Taxonomy" id="9606"/>
    <lineage>
        <taxon>Eukaryota</taxon>
        <taxon>Metazoa</taxon>
        <taxon>Chordata</taxon>
        <taxon>Craniata</taxon>
        <taxon>Vertebrata</taxon>
        <taxon>Euteleostomi</taxon>
        <taxon>Mammalia</taxon>
        <taxon>Eutheria</taxon>
        <taxon>Euarchontoglires</taxon>
        <taxon>Primates</taxon>
        <taxon>Haplorrhini</taxon>
        <taxon>Catarrhini</taxon>
        <taxon>Hominidae</taxon>
        <taxon>Homo</taxon>
    </lineage>
</organism>
<gene>
    <name evidence="15 20" type="primary">IGHA1</name>
</gene>
<keyword id="KW-0002">3D-structure</keyword>
<keyword id="KW-1064">Adaptive immunity</keyword>
<keyword id="KW-0025">Alternative splicing</keyword>
<keyword id="KW-1003">Cell membrane</keyword>
<keyword id="KW-0157">Chromophore</keyword>
<keyword id="KW-0160">Chromosomal rearrangement</keyword>
<keyword id="KW-0903">Direct protein sequencing</keyword>
<keyword id="KW-1015">Disulfide bond</keyword>
<keyword id="KW-0325">Glycoprotein</keyword>
<keyword id="KW-0391">Immunity</keyword>
<keyword id="KW-1280">Immunoglobulin</keyword>
<keyword id="KW-0393">Immunoglobulin domain</keyword>
<keyword id="KW-0472">Membrane</keyword>
<keyword id="KW-1267">Proteomics identification</keyword>
<keyword id="KW-1185">Reference proteome</keyword>
<keyword id="KW-0964">Secreted</keyword>
<keyword id="KW-0812">Transmembrane</keyword>
<keyword id="KW-1133">Transmembrane helix</keyword>
<dbReference type="EMBL" id="J00220">
    <property type="protein sequence ID" value="AAC82528.1"/>
    <property type="status" value="ALT_INIT"/>
    <property type="molecule type" value="Genomic_DNA"/>
</dbReference>
<dbReference type="EMBL" id="AL901608">
    <property type="status" value="NOT_ANNOTATED_CDS"/>
    <property type="molecule type" value="Genomic_DNA"/>
</dbReference>
<dbReference type="EMBL" id="AL928768">
    <property type="status" value="NOT_ANNOTATED_CDS"/>
    <property type="molecule type" value="Genomic_DNA"/>
</dbReference>
<dbReference type="EMBL" id="M60193">
    <property type="status" value="NOT_ANNOTATED_CDS"/>
    <property type="molecule type" value="Genomic_DNA"/>
</dbReference>
<dbReference type="PIR" id="A22360">
    <property type="entry name" value="A1HU"/>
</dbReference>
<dbReference type="PDB" id="1IGA">
    <property type="method" value="X-ray"/>
    <property type="chains" value="A/B=1-353"/>
</dbReference>
<dbReference type="PDB" id="1OW0">
    <property type="method" value="X-ray"/>
    <property type="resolution" value="3.10 A"/>
    <property type="chains" value="A/B=122-335"/>
</dbReference>
<dbReference type="PDB" id="2ESG">
    <property type="method" value="X-ray"/>
    <property type="chains" value="A/B=1-353"/>
</dbReference>
<dbReference type="PDB" id="2QEJ">
    <property type="method" value="X-ray"/>
    <property type="resolution" value="3.20 A"/>
    <property type="chains" value="A/B=123-336"/>
</dbReference>
<dbReference type="PDB" id="3CHN">
    <property type="method" value="X-ray"/>
    <property type="chains" value="A/B/C/D=2-353"/>
</dbReference>
<dbReference type="PDB" id="6LX3">
    <property type="method" value="EM"/>
    <property type="resolution" value="3.15 A"/>
    <property type="chains" value="A/B/C/D=122-353"/>
</dbReference>
<dbReference type="PDB" id="6LXW">
    <property type="method" value="EM"/>
    <property type="resolution" value="3.27 A"/>
    <property type="chains" value="A/B/C/D=122-353"/>
</dbReference>
<dbReference type="PDB" id="6UE7">
    <property type="method" value="EM"/>
    <property type="resolution" value="2.90 A"/>
    <property type="chains" value="A/B/F/G=123-353"/>
</dbReference>
<dbReference type="PDB" id="6XJA">
    <property type="method" value="EM"/>
    <property type="resolution" value="4.00 A"/>
    <property type="chains" value="A/B=122-331"/>
</dbReference>
<dbReference type="PDB" id="7UVL">
    <property type="method" value="EM"/>
    <property type="resolution" value="3.56 A"/>
    <property type="chains" value="A/B=123-331"/>
</dbReference>
<dbReference type="PDB" id="8SKU">
    <property type="method" value="EM"/>
    <property type="resolution" value="3.20 A"/>
    <property type="chains" value="A/B/C/D=1-353"/>
</dbReference>
<dbReference type="PDB" id="8SKV">
    <property type="method" value="EM"/>
    <property type="resolution" value="3.10 A"/>
    <property type="chains" value="A/B/C/D=1-353"/>
</dbReference>
<dbReference type="PDBsum" id="1IGA"/>
<dbReference type="PDBsum" id="1OW0"/>
<dbReference type="PDBsum" id="2ESG"/>
<dbReference type="PDBsum" id="2QEJ"/>
<dbReference type="PDBsum" id="3CHN"/>
<dbReference type="PDBsum" id="6LX3"/>
<dbReference type="PDBsum" id="6LXW"/>
<dbReference type="PDBsum" id="6UE7"/>
<dbReference type="PDBsum" id="6XJA"/>
<dbReference type="PDBsum" id="7UVL"/>
<dbReference type="PDBsum" id="8SKU"/>
<dbReference type="PDBsum" id="8SKV"/>
<dbReference type="EMDB" id="EMD-13316"/>
<dbReference type="EMDB" id="EMD-20749"/>
<dbReference type="EMDB" id="EMD-22204"/>
<dbReference type="EMDB" id="EMD-22277"/>
<dbReference type="EMDB" id="EMD-26813"/>
<dbReference type="EMDB" id="EMD-30004"/>
<dbReference type="EMDB" id="EMD-30008"/>
<dbReference type="EMDB" id="EMD-40567"/>
<dbReference type="EMDB" id="EMD-40568"/>
<dbReference type="SMR" id="P01876"/>
<dbReference type="ComplexPortal" id="CPX-6955">
    <property type="entry name" value="IgA1 - Ig kappa immunoglobulin complex, constant regions"/>
</dbReference>
<dbReference type="ComplexPortal" id="CPX-6956">
    <property type="entry name" value="IgA1 - Ig lambda 1 immunoglobulin complex, constant regions"/>
</dbReference>
<dbReference type="ComplexPortal" id="CPX-6958">
    <property type="entry name" value="IgA1 - Ig lambda 2 immunoglobulin complex, constant regions"/>
</dbReference>
<dbReference type="ComplexPortal" id="CPX-6959">
    <property type="entry name" value="IgA1 - Ig lambda 3 immunoglobulin complex, constant regions"/>
</dbReference>
<dbReference type="ComplexPortal" id="CPX-6960">
    <property type="entry name" value="IgA1 - Ig lambda 6 immunoglobulin complex, constant regions"/>
</dbReference>
<dbReference type="ComplexPortal" id="CPX-6961">
    <property type="entry name" value="IgA1 - Ig lambda 7 immunoglobulin complex, constant regions"/>
</dbReference>
<dbReference type="FunCoup" id="P01876">
    <property type="interactions" value="493"/>
</dbReference>
<dbReference type="IntAct" id="P01876">
    <property type="interactions" value="153"/>
</dbReference>
<dbReference type="MINT" id="P01876"/>
<dbReference type="DrugBank" id="DB01593">
    <property type="generic name" value="Zinc"/>
</dbReference>
<dbReference type="DrugBank" id="DB14487">
    <property type="generic name" value="Zinc acetate"/>
</dbReference>
<dbReference type="IMGT_GENE-DB" id="IGHA1"/>
<dbReference type="CarbonylDB" id="P01876"/>
<dbReference type="GlyConnect" id="227">
    <property type="glycosylation" value="58 N-Linked glycans (1 site), 1 O-Linked glycan"/>
</dbReference>
<dbReference type="GlyConnect" id="230">
    <property type="glycosylation" value="150 N-Linked glycans (2 sites), 49 O-Linked glycans (9 sites)"/>
</dbReference>
<dbReference type="GlyConnect" id="2965">
    <property type="glycosylation" value="44 N-Linked glycans"/>
</dbReference>
<dbReference type="GlyConnect" id="2966">
    <property type="glycosylation" value="49 N-Linked glycans"/>
</dbReference>
<dbReference type="GlyCosmos" id="P01876">
    <property type="glycosylation" value="11 sites, 233 glycans"/>
</dbReference>
<dbReference type="GlyGen" id="P01876">
    <property type="glycosylation" value="13 sites, 92 N-linked glycans (2 sites), 61 O-linked glycans (11 sites)"/>
</dbReference>
<dbReference type="iPTMnet" id="P01876"/>
<dbReference type="PhosphoSitePlus" id="P01876"/>
<dbReference type="BioMuta" id="IGHA1"/>
<dbReference type="DMDM" id="113584"/>
<dbReference type="jPOST" id="P01876"/>
<dbReference type="MassIVE" id="P01876"/>
<dbReference type="PRIDE" id="P01876"/>
<dbReference type="ProteomicsDB" id="51500"/>
<dbReference type="Pumba" id="P01876"/>
<dbReference type="Ensembl" id="ENST00000390547.3">
    <molecule id="P01876-1"/>
    <property type="protein sequence ID" value="ENSP00000374989.2"/>
    <property type="gene ID" value="ENSG00000211895.5"/>
</dbReference>
<dbReference type="Ensembl" id="ENST00000633714.1">
    <molecule id="P01876-1"/>
    <property type="protein sequence ID" value="ENSP00000488021.1"/>
    <property type="gene ID" value="ENSG00000282633.1"/>
</dbReference>
<dbReference type="Ensembl" id="ENST00000641837.1">
    <molecule id="P01876-2"/>
    <property type="protein sequence ID" value="ENSP00000493114.1"/>
    <property type="gene ID" value="ENSG00000211895.5"/>
</dbReference>
<dbReference type="UCSC" id="uc059gcy.1">
    <molecule id="P01876-2"/>
    <property type="organism name" value="human"/>
</dbReference>
<dbReference type="AGR" id="HGNC:5478"/>
<dbReference type="GeneCards" id="IGHA1"/>
<dbReference type="HGNC" id="HGNC:5478">
    <property type="gene designation" value="IGHA1"/>
</dbReference>
<dbReference type="HPA" id="ENSG00000211895">
    <property type="expression patterns" value="Tissue enhanced (intestine, salivary gland, stomach)"/>
</dbReference>
<dbReference type="MIM" id="146900">
    <property type="type" value="gene"/>
</dbReference>
<dbReference type="neXtProt" id="NX_P01876"/>
<dbReference type="OpenTargets" id="ENSG00000211895"/>
<dbReference type="VEuPathDB" id="HostDB:ENSG00000211895"/>
<dbReference type="GeneTree" id="ENSGT00940000161516"/>
<dbReference type="HOGENOM" id="CLU_030625_0_1_1"/>
<dbReference type="InParanoid" id="P01876"/>
<dbReference type="OMA" id="APEDNCH"/>
<dbReference type="OrthoDB" id="9944186at2759"/>
<dbReference type="PAN-GO" id="P01876">
    <property type="GO annotations" value="10 GO annotations based on evolutionary models"/>
</dbReference>
<dbReference type="PhylomeDB" id="P01876"/>
<dbReference type="TreeFam" id="TF334176"/>
<dbReference type="PathwayCommons" id="P01876"/>
<dbReference type="Reactome" id="R-HSA-202733">
    <property type="pathway name" value="Cell surface interactions at the vascular wall"/>
</dbReference>
<dbReference type="Reactome" id="R-HSA-2168880">
    <property type="pathway name" value="Scavenging of heme from plasma"/>
</dbReference>
<dbReference type="SignaLink" id="P01876"/>
<dbReference type="CD-CODE" id="232F8A39">
    <property type="entry name" value="P-body"/>
</dbReference>
<dbReference type="CD-CODE" id="FB4E32DD">
    <property type="entry name" value="Presynaptic clusters and postsynaptic densities"/>
</dbReference>
<dbReference type="ChiTaRS" id="IGHA1">
    <property type="organism name" value="human"/>
</dbReference>
<dbReference type="EvolutionaryTrace" id="P01876"/>
<dbReference type="Pharos" id="P01876">
    <property type="development level" value="Tbio"/>
</dbReference>
<dbReference type="PRO" id="PR:P01876"/>
<dbReference type="Proteomes" id="UP000005640">
    <property type="component" value="Chromosome 14"/>
</dbReference>
<dbReference type="RNAct" id="P01876">
    <property type="molecule type" value="protein"/>
</dbReference>
<dbReference type="Bgee" id="ENSG00000211895">
    <property type="expression patterns" value="Expressed in duodenum and 91 other cell types or tissues"/>
</dbReference>
<dbReference type="ExpressionAtlas" id="P01876">
    <property type="expression patterns" value="baseline and differential"/>
</dbReference>
<dbReference type="GO" id="GO:0072562">
    <property type="term" value="C:blood microparticle"/>
    <property type="evidence" value="ECO:0007005"/>
    <property type="project" value="UniProtKB"/>
</dbReference>
<dbReference type="GO" id="GO:0070062">
    <property type="term" value="C:extracellular exosome"/>
    <property type="evidence" value="ECO:0007005"/>
    <property type="project" value="UniProtKB"/>
</dbReference>
<dbReference type="GO" id="GO:0005576">
    <property type="term" value="C:extracellular region"/>
    <property type="evidence" value="ECO:0000304"/>
    <property type="project" value="Reactome"/>
</dbReference>
<dbReference type="GO" id="GO:0005615">
    <property type="term" value="C:extracellular space"/>
    <property type="evidence" value="ECO:0000314"/>
    <property type="project" value="UniProtKB"/>
</dbReference>
<dbReference type="GO" id="GO:0071745">
    <property type="term" value="C:IgA immunoglobulin complex"/>
    <property type="evidence" value="ECO:0000303"/>
    <property type="project" value="ComplexPortal"/>
</dbReference>
<dbReference type="GO" id="GO:0071735">
    <property type="term" value="C:IgG immunoglobulin complex"/>
    <property type="evidence" value="ECO:0000303"/>
    <property type="project" value="ComplexPortal"/>
</dbReference>
<dbReference type="GO" id="GO:0042571">
    <property type="term" value="C:immunoglobulin complex, circulating"/>
    <property type="evidence" value="ECO:0000318"/>
    <property type="project" value="GO_Central"/>
</dbReference>
<dbReference type="GO" id="GO:0071748">
    <property type="term" value="C:monomeric IgA immunoglobulin complex"/>
    <property type="evidence" value="ECO:0000314"/>
    <property type="project" value="UniProtKB"/>
</dbReference>
<dbReference type="GO" id="GO:0005886">
    <property type="term" value="C:plasma membrane"/>
    <property type="evidence" value="ECO:0000303"/>
    <property type="project" value="ComplexPortal"/>
</dbReference>
<dbReference type="GO" id="GO:0071752">
    <property type="term" value="C:secretory dimeric IgA immunoglobulin complex"/>
    <property type="evidence" value="ECO:0000314"/>
    <property type="project" value="UniProtKB"/>
</dbReference>
<dbReference type="GO" id="GO:0071751">
    <property type="term" value="C:secretory IgA immunoglobulin complex"/>
    <property type="evidence" value="ECO:0000314"/>
    <property type="project" value="UniProtKB"/>
</dbReference>
<dbReference type="GO" id="GO:0003823">
    <property type="term" value="F:antigen binding"/>
    <property type="evidence" value="ECO:0000318"/>
    <property type="project" value="GO_Central"/>
</dbReference>
<dbReference type="GO" id="GO:0002250">
    <property type="term" value="P:adaptive immune response"/>
    <property type="evidence" value="ECO:0000303"/>
    <property type="project" value="ComplexPortal"/>
</dbReference>
<dbReference type="GO" id="GO:0019731">
    <property type="term" value="P:antibacterial humoral response"/>
    <property type="evidence" value="ECO:0000314"/>
    <property type="project" value="UniProtKB"/>
</dbReference>
<dbReference type="GO" id="GO:0050853">
    <property type="term" value="P:B cell receptor signaling pathway"/>
    <property type="evidence" value="ECO:0000303"/>
    <property type="project" value="ComplexPortal"/>
</dbReference>
<dbReference type="GO" id="GO:0006958">
    <property type="term" value="P:complement activation, classical pathway"/>
    <property type="evidence" value="ECO:0000318"/>
    <property type="project" value="GO_Central"/>
</dbReference>
<dbReference type="GO" id="GO:0003094">
    <property type="term" value="P:glomerular filtration"/>
    <property type="evidence" value="ECO:0000315"/>
    <property type="project" value="UniProtKB"/>
</dbReference>
<dbReference type="GO" id="GO:0006955">
    <property type="term" value="P:immune response"/>
    <property type="evidence" value="ECO:0000303"/>
    <property type="project" value="UniProtKB"/>
</dbReference>
<dbReference type="GO" id="GO:0060267">
    <property type="term" value="P:positive regulation of respiratory burst"/>
    <property type="evidence" value="ECO:0000314"/>
    <property type="project" value="UniProtKB"/>
</dbReference>
<dbReference type="CDD" id="cd04986">
    <property type="entry name" value="IgC1_CH2_IgA"/>
    <property type="match status" value="1"/>
</dbReference>
<dbReference type="CDD" id="cd05768">
    <property type="entry name" value="IgC1_CH3_IgAGD_CH4_IgAEM"/>
    <property type="match status" value="1"/>
</dbReference>
<dbReference type="FunFam" id="2.60.40.10:FF:002016">
    <property type="entry name" value="Immunoglobulin heavy constant alpha 2"/>
    <property type="match status" value="1"/>
</dbReference>
<dbReference type="FunFam" id="2.60.40.10:FF:000998">
    <property type="entry name" value="Immunoglobulin heavy constant epsilon"/>
    <property type="match status" value="1"/>
</dbReference>
<dbReference type="FunFam" id="2.60.40.10:FF:000463">
    <property type="entry name" value="Immunoglobulin heavy constant gamma 1"/>
    <property type="match status" value="1"/>
</dbReference>
<dbReference type="Gene3D" id="2.60.40.10">
    <property type="entry name" value="Immunoglobulins"/>
    <property type="match status" value="3"/>
</dbReference>
<dbReference type="InterPro" id="IPR007110">
    <property type="entry name" value="Ig-like_dom"/>
</dbReference>
<dbReference type="InterPro" id="IPR036179">
    <property type="entry name" value="Ig-like_dom_sf"/>
</dbReference>
<dbReference type="InterPro" id="IPR013783">
    <property type="entry name" value="Ig-like_fold"/>
</dbReference>
<dbReference type="InterPro" id="IPR003006">
    <property type="entry name" value="Ig/MHC_CS"/>
</dbReference>
<dbReference type="InterPro" id="IPR003597">
    <property type="entry name" value="Ig_C1-set"/>
</dbReference>
<dbReference type="InterPro" id="IPR050380">
    <property type="entry name" value="Immune_Resp_Modulators"/>
</dbReference>
<dbReference type="InterPro" id="IPR013151">
    <property type="entry name" value="Immunoglobulin_dom"/>
</dbReference>
<dbReference type="PANTHER" id="PTHR23411">
    <property type="entry name" value="TAPASIN"/>
    <property type="match status" value="1"/>
</dbReference>
<dbReference type="Pfam" id="PF07654">
    <property type="entry name" value="C1-set"/>
    <property type="match status" value="2"/>
</dbReference>
<dbReference type="Pfam" id="PF00047">
    <property type="entry name" value="ig"/>
    <property type="match status" value="1"/>
</dbReference>
<dbReference type="SMART" id="SM00407">
    <property type="entry name" value="IGc1"/>
    <property type="match status" value="2"/>
</dbReference>
<dbReference type="SUPFAM" id="SSF48726">
    <property type="entry name" value="Immunoglobulin"/>
    <property type="match status" value="3"/>
</dbReference>
<dbReference type="PROSITE" id="PS50835">
    <property type="entry name" value="IG_LIKE"/>
    <property type="match status" value="3"/>
</dbReference>
<dbReference type="PROSITE" id="PS00290">
    <property type="entry name" value="IG_MHC"/>
    <property type="match status" value="1"/>
</dbReference>
<sequence length="398" mass="42849">ASPTSPKVFPLSLCSTQPDGNVVIACLVQGFFPQEPLSVTWSESGQGVTARNFPPSQDASGDLYTTSSQLTLPATQCLAGKSVTCHVKHYTNPSQDVTVPCPVPSTPPTPSPSTPPTPSPSCCHPRLSLHRPALEDLLLGSEANLTCTLTGLRDASGVTFTWTPSSGKSAVQGPPERDLCGCYSVSSVLPGCAEPWNHGKTFTCTAAYPESKTPLTATLSKSGNTFRPEVHLLPPPSEELALNELVTLTCLARGFSPKDVLVRWLQGSQELPREKYLTWASRQEPSQGTTTFAVTSILRVAAEDWKKGDTFSCMVGHEALPLAFTQKTIDRLADWQMPPPYVVLDLPQETLEEETPGANLWPTTITFLTLFLLSLFYSTALTVTSVRGPSGNREGPQY</sequence>
<proteinExistence type="evidence at protein level"/>